<proteinExistence type="inferred from homology"/>
<sequence length="618" mass="72031">MAGSFVTTLNDPRAFDIAQALLDGFNRHYKLFRQTSAEAKQRFEAADWHGQQRAQRERIEFYDLRVDEAAERLENEFRASSLSEETWQQVKLYYIGLLINHHQPELAETFFNSVTTKILHRSYFRNDFIFVRPAVSTEYIENEEPDSLPTYRAYYPSRPGSAEGLRETLLRIVDNYQLQREFEDLGRDIDYVLQAFRNQFGDVKLSANFQIQVLASLFFRNKGAYIVGKVINGFRETGFALPVLHNSRELLTIDTALFGEDELLLLFSFARAYFLVDMEIPSAYVQFLRSLMPRKPRWELYNALGLQKQGKNQFYRDFLYHLRHSSDSFRIAPGIKGMVMLVFDLPSFPFVFKVIKDFYPPQKDTTRELIQSKYQLVKTHDRVGRMADSLEYSNVAFPRQRFEPELIEEIRHFCPSLLEEEGDSLVLKHLYIERRMIPLNIYLQEATPEQMKHAVIEYGNAIKDLVAANIFPGDMLWKNFGVTRHGKVVFYDYDEIEYLTDCNFRKVPEPRTEEEEMSGDIWYSVGPKDVFPETFGPFLLGNPTVREVFMQHHAELLDPAFWQGRKDRIAGGYVHDVFPYDPHKRFRRPLGLGFGSLDAEAVSLHPASATTQLGHNPI</sequence>
<protein>
    <recommendedName>
        <fullName evidence="1">Isocitrate dehydrogenase kinase/phosphatase</fullName>
        <shortName evidence="1">IDH kinase/phosphatase</shortName>
        <shortName evidence="1">IDHK/P</shortName>
        <ecNumber evidence="1">2.7.11.5</ecNumber>
        <ecNumber evidence="1">3.1.3.-</ecNumber>
    </recommendedName>
</protein>
<keyword id="KW-0067">ATP-binding</keyword>
<keyword id="KW-0963">Cytoplasm</keyword>
<keyword id="KW-0329">Glyoxylate bypass</keyword>
<keyword id="KW-0378">Hydrolase</keyword>
<keyword id="KW-0418">Kinase</keyword>
<keyword id="KW-0547">Nucleotide-binding</keyword>
<keyword id="KW-0904">Protein phosphatase</keyword>
<keyword id="KW-1185">Reference proteome</keyword>
<keyword id="KW-0723">Serine/threonine-protein kinase</keyword>
<keyword id="KW-0808">Transferase</keyword>
<keyword id="KW-0816">Tricarboxylic acid cycle</keyword>
<comment type="function">
    <text evidence="1">Bifunctional enzyme which can phosphorylate or dephosphorylate isocitrate dehydrogenase (IDH) on a specific serine residue. This is a regulatory mechanism which enables bacteria to bypass the Krebs cycle via the glyoxylate shunt in response to the source of carbon. When bacteria are grown on glucose, IDH is fully active and unphosphorylated, but when grown on acetate or ethanol, the activity of IDH declines drastically concomitant with its phosphorylation.</text>
</comment>
<comment type="catalytic activity">
    <reaction evidence="1">
        <text>L-seryl-[isocitrate dehydrogenase] + ATP = O-phospho-L-seryl-[isocitrate dehydrogenase] + ADP + H(+)</text>
        <dbReference type="Rhea" id="RHEA:43540"/>
        <dbReference type="Rhea" id="RHEA-COMP:10605"/>
        <dbReference type="Rhea" id="RHEA-COMP:10606"/>
        <dbReference type="ChEBI" id="CHEBI:15378"/>
        <dbReference type="ChEBI" id="CHEBI:29999"/>
        <dbReference type="ChEBI" id="CHEBI:30616"/>
        <dbReference type="ChEBI" id="CHEBI:83421"/>
        <dbReference type="ChEBI" id="CHEBI:456216"/>
        <dbReference type="EC" id="2.7.11.5"/>
    </reaction>
</comment>
<comment type="subcellular location">
    <subcellularLocation>
        <location evidence="1">Cytoplasm</location>
    </subcellularLocation>
</comment>
<comment type="similarity">
    <text evidence="1">Belongs to the AceK family.</text>
</comment>
<evidence type="ECO:0000255" key="1">
    <source>
        <dbReference type="HAMAP-Rule" id="MF_00747"/>
    </source>
</evidence>
<organism>
    <name type="scientific">Methylibium petroleiphilum (strain ATCC BAA-1232 / LMG 22953 / PM1)</name>
    <dbReference type="NCBI Taxonomy" id="420662"/>
    <lineage>
        <taxon>Bacteria</taxon>
        <taxon>Pseudomonadati</taxon>
        <taxon>Pseudomonadota</taxon>
        <taxon>Betaproteobacteria</taxon>
        <taxon>Burkholderiales</taxon>
        <taxon>Sphaerotilaceae</taxon>
        <taxon>Methylibium</taxon>
    </lineage>
</organism>
<name>ACEK_METPP</name>
<reference key="1">
    <citation type="journal article" date="2007" name="J. Bacteriol.">
        <title>Whole-genome analysis of the methyl tert-butyl ether-degrading beta-proteobacterium Methylibium petroleiphilum PM1.</title>
        <authorList>
            <person name="Kane S.R."/>
            <person name="Chakicherla A.Y."/>
            <person name="Chain P.S.G."/>
            <person name="Schmidt R."/>
            <person name="Shin M.W."/>
            <person name="Legler T.C."/>
            <person name="Scow K.M."/>
            <person name="Larimer F.W."/>
            <person name="Lucas S.M."/>
            <person name="Richardson P.M."/>
            <person name="Hristova K.R."/>
        </authorList>
    </citation>
    <scope>NUCLEOTIDE SEQUENCE [LARGE SCALE GENOMIC DNA]</scope>
    <source>
        <strain>ATCC BAA-1232 / LMG 22953 / PM1</strain>
    </source>
</reference>
<feature type="chain" id="PRO_0000288289" description="Isocitrate dehydrogenase kinase/phosphatase">
    <location>
        <begin position="1"/>
        <end position="618"/>
    </location>
</feature>
<feature type="active site" evidence="1">
    <location>
        <position position="388"/>
    </location>
</feature>
<feature type="binding site" evidence="1">
    <location>
        <begin position="332"/>
        <end position="338"/>
    </location>
    <ligand>
        <name>ATP</name>
        <dbReference type="ChEBI" id="CHEBI:30616"/>
    </ligand>
</feature>
<feature type="binding site" evidence="1">
    <location>
        <position position="353"/>
    </location>
    <ligand>
        <name>ATP</name>
        <dbReference type="ChEBI" id="CHEBI:30616"/>
    </ligand>
</feature>
<dbReference type="EC" id="2.7.11.5" evidence="1"/>
<dbReference type="EC" id="3.1.3.-" evidence="1"/>
<dbReference type="EMBL" id="CP000555">
    <property type="protein sequence ID" value="ABM96321.1"/>
    <property type="molecule type" value="Genomic_DNA"/>
</dbReference>
<dbReference type="RefSeq" id="WP_011830942.1">
    <property type="nucleotide sequence ID" value="NC_008825.1"/>
</dbReference>
<dbReference type="SMR" id="A2SL82"/>
<dbReference type="STRING" id="420662.Mpe_A3368"/>
<dbReference type="KEGG" id="mpt:Mpe_A3368"/>
<dbReference type="eggNOG" id="COG4579">
    <property type="taxonomic scope" value="Bacteria"/>
</dbReference>
<dbReference type="HOGENOM" id="CLU_033804_1_1_4"/>
<dbReference type="Proteomes" id="UP000000366">
    <property type="component" value="Chromosome"/>
</dbReference>
<dbReference type="GO" id="GO:0005737">
    <property type="term" value="C:cytoplasm"/>
    <property type="evidence" value="ECO:0007669"/>
    <property type="project" value="UniProtKB-SubCell"/>
</dbReference>
<dbReference type="GO" id="GO:0008772">
    <property type="term" value="F:[isocitrate dehydrogenase (NADP+)] kinase activity"/>
    <property type="evidence" value="ECO:0007669"/>
    <property type="project" value="UniProtKB-UniRule"/>
</dbReference>
<dbReference type="GO" id="GO:0016208">
    <property type="term" value="F:AMP binding"/>
    <property type="evidence" value="ECO:0007669"/>
    <property type="project" value="TreeGrafter"/>
</dbReference>
<dbReference type="GO" id="GO:0005524">
    <property type="term" value="F:ATP binding"/>
    <property type="evidence" value="ECO:0007669"/>
    <property type="project" value="UniProtKB-UniRule"/>
</dbReference>
<dbReference type="GO" id="GO:0004721">
    <property type="term" value="F:phosphoprotein phosphatase activity"/>
    <property type="evidence" value="ECO:0007669"/>
    <property type="project" value="UniProtKB-KW"/>
</dbReference>
<dbReference type="GO" id="GO:0004674">
    <property type="term" value="F:protein serine/threonine kinase activity"/>
    <property type="evidence" value="ECO:0007669"/>
    <property type="project" value="UniProtKB-KW"/>
</dbReference>
<dbReference type="GO" id="GO:0006006">
    <property type="term" value="P:glucose metabolic process"/>
    <property type="evidence" value="ECO:0007669"/>
    <property type="project" value="InterPro"/>
</dbReference>
<dbReference type="GO" id="GO:0006097">
    <property type="term" value="P:glyoxylate cycle"/>
    <property type="evidence" value="ECO:0007669"/>
    <property type="project" value="UniProtKB-UniRule"/>
</dbReference>
<dbReference type="GO" id="GO:0006099">
    <property type="term" value="P:tricarboxylic acid cycle"/>
    <property type="evidence" value="ECO:0007669"/>
    <property type="project" value="UniProtKB-UniRule"/>
</dbReference>
<dbReference type="HAMAP" id="MF_00747">
    <property type="entry name" value="AceK"/>
    <property type="match status" value="1"/>
</dbReference>
<dbReference type="InterPro" id="IPR046855">
    <property type="entry name" value="AceK_kinase"/>
</dbReference>
<dbReference type="InterPro" id="IPR046854">
    <property type="entry name" value="AceK_regulatory"/>
</dbReference>
<dbReference type="InterPro" id="IPR010452">
    <property type="entry name" value="Isocitrate_DH_AceK"/>
</dbReference>
<dbReference type="NCBIfam" id="NF002804">
    <property type="entry name" value="PRK02946.1"/>
    <property type="match status" value="1"/>
</dbReference>
<dbReference type="PANTHER" id="PTHR39559">
    <property type="match status" value="1"/>
</dbReference>
<dbReference type="PANTHER" id="PTHR39559:SF1">
    <property type="entry name" value="ISOCITRATE DEHYDROGENASE KINASE_PHOSPHATASE"/>
    <property type="match status" value="1"/>
</dbReference>
<dbReference type="Pfam" id="PF06315">
    <property type="entry name" value="AceK_kinase"/>
    <property type="match status" value="1"/>
</dbReference>
<dbReference type="Pfam" id="PF20423">
    <property type="entry name" value="AceK_regulatory"/>
    <property type="match status" value="1"/>
</dbReference>
<dbReference type="PIRSF" id="PIRSF000719">
    <property type="entry name" value="AceK"/>
    <property type="match status" value="1"/>
</dbReference>
<gene>
    <name evidence="1" type="primary">aceK</name>
    <name type="ordered locus">Mpe_A3368</name>
</gene>
<accession>A2SL82</accession>